<reference key="1">
    <citation type="journal article" date="2006" name="Proc. Natl. Acad. Sci. U.S.A.">
        <title>Comparative genomics of the lactic acid bacteria.</title>
        <authorList>
            <person name="Makarova K.S."/>
            <person name="Slesarev A."/>
            <person name="Wolf Y.I."/>
            <person name="Sorokin A."/>
            <person name="Mirkin B."/>
            <person name="Koonin E.V."/>
            <person name="Pavlov A."/>
            <person name="Pavlova N."/>
            <person name="Karamychev V."/>
            <person name="Polouchine N."/>
            <person name="Shakhova V."/>
            <person name="Grigoriev I."/>
            <person name="Lou Y."/>
            <person name="Rohksar D."/>
            <person name="Lucas S."/>
            <person name="Huang K."/>
            <person name="Goodstein D.M."/>
            <person name="Hawkins T."/>
            <person name="Plengvidhya V."/>
            <person name="Welker D."/>
            <person name="Hughes J."/>
            <person name="Goh Y."/>
            <person name="Benson A."/>
            <person name="Baldwin K."/>
            <person name="Lee J.-H."/>
            <person name="Diaz-Muniz I."/>
            <person name="Dosti B."/>
            <person name="Smeianov V."/>
            <person name="Wechter W."/>
            <person name="Barabote R."/>
            <person name="Lorca G."/>
            <person name="Altermann E."/>
            <person name="Barrangou R."/>
            <person name="Ganesan B."/>
            <person name="Xie Y."/>
            <person name="Rawsthorne H."/>
            <person name="Tamir D."/>
            <person name="Parker C."/>
            <person name="Breidt F."/>
            <person name="Broadbent J.R."/>
            <person name="Hutkins R."/>
            <person name="O'Sullivan D."/>
            <person name="Steele J."/>
            <person name="Unlu G."/>
            <person name="Saier M.H. Jr."/>
            <person name="Klaenhammer T."/>
            <person name="Richardson P."/>
            <person name="Kozyavkin S."/>
            <person name="Weimer B.C."/>
            <person name="Mills D.A."/>
        </authorList>
    </citation>
    <scope>NUCLEOTIDE SEQUENCE [LARGE SCALE GENOMIC DNA]</scope>
    <source>
        <strain>SK11</strain>
    </source>
</reference>
<feature type="chain" id="PRO_1000149214" description="2-isopropylmalate synthase">
    <location>
        <begin position="1"/>
        <end position="513"/>
    </location>
</feature>
<feature type="domain" description="Pyruvate carboxyltransferase" evidence="1">
    <location>
        <begin position="4"/>
        <end position="266"/>
    </location>
</feature>
<feature type="region of interest" description="Regulatory domain" evidence="1">
    <location>
        <begin position="390"/>
        <end position="513"/>
    </location>
</feature>
<feature type="binding site" evidence="1">
    <location>
        <position position="13"/>
    </location>
    <ligand>
        <name>Mn(2+)</name>
        <dbReference type="ChEBI" id="CHEBI:29035"/>
    </ligand>
</feature>
<feature type="binding site" evidence="1">
    <location>
        <position position="201"/>
    </location>
    <ligand>
        <name>Mn(2+)</name>
        <dbReference type="ChEBI" id="CHEBI:29035"/>
    </ligand>
</feature>
<feature type="binding site" evidence="1">
    <location>
        <position position="203"/>
    </location>
    <ligand>
        <name>Mn(2+)</name>
        <dbReference type="ChEBI" id="CHEBI:29035"/>
    </ligand>
</feature>
<feature type="binding site" evidence="1">
    <location>
        <position position="237"/>
    </location>
    <ligand>
        <name>Mn(2+)</name>
        <dbReference type="ChEBI" id="CHEBI:29035"/>
    </ligand>
</feature>
<sequence length="513" mass="55775">MRKIEFFDTSLRDGEQTPGVIFSIAEKVTIAKQLEKWGISVIEAGFPAASPDSFEAVKQISKALKETAVTALARCVITDIDKAVEAVREAQHPQIHVFIATSPIHMKYKFKISPDEVLKTIDKCVRHAHEQVEVVEFSPEDATRTEPEFLLKAVQTAVDAGATYINIPDTVGYTTPEEYGKIFKMLIDNIKADREIIFSPHCHDDLGMAVANSLAAIKAGAGRVEGTVNGIGERAGNAAIEEIAVALHIRKDYYQAKSPLVLAETMATAELISQFSGIAIPKNKAVVGANAFAHESGIHQDGVLKNAETYEIISPELVGIKHNSLPLGKLSGRHAFTEKLTELNISYDAKELPNLFERFKRLADKKKEITDADIHALFTGETVKNLAGFILNNVQIDGHKALVELKNQDAEIYVSQGEGSGSVDAIFQAIDKVFNYQLKLISYSVDAVTNGIDAQATTVVSVENLATGTIFNAKGVDYDVLKGSAIAYMNANVLVQKENSQGKVEQISAHDGI</sequence>
<accession>Q02YX5</accession>
<gene>
    <name evidence="1" type="primary">leuA</name>
    <name type="ordered locus">LACR_1323</name>
</gene>
<dbReference type="EC" id="2.3.3.13" evidence="1"/>
<dbReference type="EMBL" id="CP000425">
    <property type="protein sequence ID" value="ABJ72847.1"/>
    <property type="molecule type" value="Genomic_DNA"/>
</dbReference>
<dbReference type="RefSeq" id="WP_011676142.1">
    <property type="nucleotide sequence ID" value="NC_008527.1"/>
</dbReference>
<dbReference type="SMR" id="Q02YX5"/>
<dbReference type="KEGG" id="llc:LACR_1323"/>
<dbReference type="HOGENOM" id="CLU_022158_0_1_9"/>
<dbReference type="UniPathway" id="UPA00048">
    <property type="reaction ID" value="UER00070"/>
</dbReference>
<dbReference type="Proteomes" id="UP000000240">
    <property type="component" value="Chromosome"/>
</dbReference>
<dbReference type="GO" id="GO:0005737">
    <property type="term" value="C:cytoplasm"/>
    <property type="evidence" value="ECO:0007669"/>
    <property type="project" value="UniProtKB-SubCell"/>
</dbReference>
<dbReference type="GO" id="GO:0003852">
    <property type="term" value="F:2-isopropylmalate synthase activity"/>
    <property type="evidence" value="ECO:0007669"/>
    <property type="project" value="UniProtKB-UniRule"/>
</dbReference>
<dbReference type="GO" id="GO:0003985">
    <property type="term" value="F:acetyl-CoA C-acetyltransferase activity"/>
    <property type="evidence" value="ECO:0007669"/>
    <property type="project" value="UniProtKB-UniRule"/>
</dbReference>
<dbReference type="GO" id="GO:0030145">
    <property type="term" value="F:manganese ion binding"/>
    <property type="evidence" value="ECO:0007669"/>
    <property type="project" value="UniProtKB-UniRule"/>
</dbReference>
<dbReference type="GO" id="GO:0009098">
    <property type="term" value="P:L-leucine biosynthetic process"/>
    <property type="evidence" value="ECO:0007669"/>
    <property type="project" value="UniProtKB-UniRule"/>
</dbReference>
<dbReference type="CDD" id="cd07940">
    <property type="entry name" value="DRE_TIM_IPMS"/>
    <property type="match status" value="1"/>
</dbReference>
<dbReference type="FunFam" id="1.10.238.260:FF:000001">
    <property type="entry name" value="2-isopropylmalate synthase"/>
    <property type="match status" value="1"/>
</dbReference>
<dbReference type="FunFam" id="3.20.20.70:FF:000010">
    <property type="entry name" value="2-isopropylmalate synthase"/>
    <property type="match status" value="1"/>
</dbReference>
<dbReference type="Gene3D" id="1.10.238.260">
    <property type="match status" value="1"/>
</dbReference>
<dbReference type="Gene3D" id="3.30.160.270">
    <property type="match status" value="1"/>
</dbReference>
<dbReference type="Gene3D" id="3.20.20.70">
    <property type="entry name" value="Aldolase class I"/>
    <property type="match status" value="1"/>
</dbReference>
<dbReference type="HAMAP" id="MF_01025">
    <property type="entry name" value="LeuA_type1"/>
    <property type="match status" value="1"/>
</dbReference>
<dbReference type="InterPro" id="IPR050073">
    <property type="entry name" value="2-IPM_HCS-like"/>
</dbReference>
<dbReference type="InterPro" id="IPR013709">
    <property type="entry name" value="2-isopropylmalate_synth_dimer"/>
</dbReference>
<dbReference type="InterPro" id="IPR002034">
    <property type="entry name" value="AIPM/Hcit_synth_CS"/>
</dbReference>
<dbReference type="InterPro" id="IPR013785">
    <property type="entry name" value="Aldolase_TIM"/>
</dbReference>
<dbReference type="InterPro" id="IPR054691">
    <property type="entry name" value="LeuA/HCS_post-cat"/>
</dbReference>
<dbReference type="InterPro" id="IPR036230">
    <property type="entry name" value="LeuA_allosteric_dom_sf"/>
</dbReference>
<dbReference type="InterPro" id="IPR005671">
    <property type="entry name" value="LeuA_bact_synth"/>
</dbReference>
<dbReference type="InterPro" id="IPR000891">
    <property type="entry name" value="PYR_CT"/>
</dbReference>
<dbReference type="NCBIfam" id="TIGR00973">
    <property type="entry name" value="leuA_bact"/>
    <property type="match status" value="1"/>
</dbReference>
<dbReference type="NCBIfam" id="NF002086">
    <property type="entry name" value="PRK00915.1-3"/>
    <property type="match status" value="1"/>
</dbReference>
<dbReference type="NCBIfam" id="NF002088">
    <property type="entry name" value="PRK00915.1-5"/>
    <property type="match status" value="1"/>
</dbReference>
<dbReference type="PANTHER" id="PTHR10277:SF9">
    <property type="entry name" value="2-ISOPROPYLMALATE SYNTHASE 1, CHLOROPLASTIC-RELATED"/>
    <property type="match status" value="1"/>
</dbReference>
<dbReference type="PANTHER" id="PTHR10277">
    <property type="entry name" value="HOMOCITRATE SYNTHASE-RELATED"/>
    <property type="match status" value="1"/>
</dbReference>
<dbReference type="Pfam" id="PF22617">
    <property type="entry name" value="HCS_D2"/>
    <property type="match status" value="1"/>
</dbReference>
<dbReference type="Pfam" id="PF00682">
    <property type="entry name" value="HMGL-like"/>
    <property type="match status" value="1"/>
</dbReference>
<dbReference type="Pfam" id="PF08502">
    <property type="entry name" value="LeuA_dimer"/>
    <property type="match status" value="1"/>
</dbReference>
<dbReference type="SMART" id="SM00917">
    <property type="entry name" value="LeuA_dimer"/>
    <property type="match status" value="1"/>
</dbReference>
<dbReference type="SUPFAM" id="SSF110921">
    <property type="entry name" value="2-isopropylmalate synthase LeuA, allosteric (dimerisation) domain"/>
    <property type="match status" value="1"/>
</dbReference>
<dbReference type="SUPFAM" id="SSF51569">
    <property type="entry name" value="Aldolase"/>
    <property type="match status" value="1"/>
</dbReference>
<dbReference type="PROSITE" id="PS00815">
    <property type="entry name" value="AIPM_HOMOCIT_SYNTH_1"/>
    <property type="match status" value="1"/>
</dbReference>
<dbReference type="PROSITE" id="PS00816">
    <property type="entry name" value="AIPM_HOMOCIT_SYNTH_2"/>
    <property type="match status" value="1"/>
</dbReference>
<dbReference type="PROSITE" id="PS50991">
    <property type="entry name" value="PYR_CT"/>
    <property type="match status" value="1"/>
</dbReference>
<name>LEU1_LACLS</name>
<keyword id="KW-0028">Amino-acid biosynthesis</keyword>
<keyword id="KW-0100">Branched-chain amino acid biosynthesis</keyword>
<keyword id="KW-0963">Cytoplasm</keyword>
<keyword id="KW-0432">Leucine biosynthesis</keyword>
<keyword id="KW-0464">Manganese</keyword>
<keyword id="KW-0479">Metal-binding</keyword>
<keyword id="KW-0808">Transferase</keyword>
<comment type="function">
    <text evidence="1">Catalyzes the condensation of the acetyl group of acetyl-CoA with 3-methyl-2-oxobutanoate (2-ketoisovalerate) to form 3-carboxy-3-hydroxy-4-methylpentanoate (2-isopropylmalate).</text>
</comment>
<comment type="catalytic activity">
    <reaction evidence="1">
        <text>3-methyl-2-oxobutanoate + acetyl-CoA + H2O = (2S)-2-isopropylmalate + CoA + H(+)</text>
        <dbReference type="Rhea" id="RHEA:21524"/>
        <dbReference type="ChEBI" id="CHEBI:1178"/>
        <dbReference type="ChEBI" id="CHEBI:11851"/>
        <dbReference type="ChEBI" id="CHEBI:15377"/>
        <dbReference type="ChEBI" id="CHEBI:15378"/>
        <dbReference type="ChEBI" id="CHEBI:57287"/>
        <dbReference type="ChEBI" id="CHEBI:57288"/>
        <dbReference type="EC" id="2.3.3.13"/>
    </reaction>
</comment>
<comment type="cofactor">
    <cofactor evidence="1">
        <name>Mn(2+)</name>
        <dbReference type="ChEBI" id="CHEBI:29035"/>
    </cofactor>
</comment>
<comment type="pathway">
    <text evidence="1">Amino-acid biosynthesis; L-leucine biosynthesis; L-leucine from 3-methyl-2-oxobutanoate: step 1/4.</text>
</comment>
<comment type="subunit">
    <text evidence="1">Homodimer.</text>
</comment>
<comment type="subcellular location">
    <subcellularLocation>
        <location evidence="1">Cytoplasm</location>
    </subcellularLocation>
</comment>
<comment type="similarity">
    <text evidence="1">Belongs to the alpha-IPM synthase/homocitrate synthase family. LeuA type 1 subfamily.</text>
</comment>
<evidence type="ECO:0000255" key="1">
    <source>
        <dbReference type="HAMAP-Rule" id="MF_01025"/>
    </source>
</evidence>
<protein>
    <recommendedName>
        <fullName evidence="1">2-isopropylmalate synthase</fullName>
        <ecNumber evidence="1">2.3.3.13</ecNumber>
    </recommendedName>
    <alternativeName>
        <fullName evidence="1">Alpha-IPM synthase</fullName>
    </alternativeName>
    <alternativeName>
        <fullName evidence="1">Alpha-isopropylmalate synthase</fullName>
    </alternativeName>
</protein>
<organism>
    <name type="scientific">Lactococcus lactis subsp. cremoris (strain SK11)</name>
    <dbReference type="NCBI Taxonomy" id="272622"/>
    <lineage>
        <taxon>Bacteria</taxon>
        <taxon>Bacillati</taxon>
        <taxon>Bacillota</taxon>
        <taxon>Bacilli</taxon>
        <taxon>Lactobacillales</taxon>
        <taxon>Streptococcaceae</taxon>
        <taxon>Lactococcus</taxon>
        <taxon>Lactococcus cremoris subsp. cremoris</taxon>
    </lineage>
</organism>
<proteinExistence type="inferred from homology"/>